<feature type="chain" id="PRO_0000180269" description="Acyl carrier protein MbtL">
    <location>
        <begin position="1"/>
        <end position="84"/>
    </location>
</feature>
<feature type="domain" description="Carrier" evidence="2">
    <location>
        <begin position="6"/>
        <end position="81"/>
    </location>
</feature>
<feature type="modified residue" description="O-(pantetheine 4'-phosphoryl)serine" evidence="2 5">
    <location>
        <position position="41"/>
    </location>
</feature>
<feature type="mutagenesis site" description="Lack of phosphopantetheinylation." evidence="5">
    <original>S</original>
    <variation>A</variation>
    <location>
        <position position="41"/>
    </location>
</feature>
<proteinExistence type="evidence at protein level"/>
<comment type="function">
    <text evidence="4">Acyl carrier protein involved in the formation of acyl-S-ACP intermediates within the mycobactin biosynthesis process. The aliphatic chains carried by ACP are subsequently transferred on to the mycobactin core by MbtK.</text>
</comment>
<comment type="pathway">
    <text>Siderophore biosynthesis; mycobactin biosynthesis.</text>
</comment>
<comment type="subcellular location">
    <subcellularLocation>
        <location evidence="1">Cytoplasm</location>
    </subcellularLocation>
</comment>
<comment type="induction">
    <text evidence="3">Induced by iron starvation conditions. Transcriptionally repressed by IdeR and iron.</text>
</comment>
<comment type="PTM">
    <text evidence="5">4'-phosphopantetheine is transferred from CoA to a specific serine of apo-ACP by PptT, leading to the activated holo-ACP form.</text>
</comment>
<comment type="sequence caution" evidence="6">
    <conflict type="erroneous initiation">
        <sequence resource="EMBL-CDS" id="CCP44102"/>
    </conflict>
    <text>Extended N-terminus.</text>
</comment>
<sequence>MTSSPSTVSTTLLSILRDDLNIDLTRVTPDARLVDDVGLDSVAFAVGMVAIEERLGVALSEEELLTCDTVGELEAAIAAKYRDE</sequence>
<name>MBTL_MYCTU</name>
<organism>
    <name type="scientific">Mycobacterium tuberculosis (strain ATCC 25618 / H37Rv)</name>
    <dbReference type="NCBI Taxonomy" id="83332"/>
    <lineage>
        <taxon>Bacteria</taxon>
        <taxon>Bacillati</taxon>
        <taxon>Actinomycetota</taxon>
        <taxon>Actinomycetes</taxon>
        <taxon>Mycobacteriales</taxon>
        <taxon>Mycobacteriaceae</taxon>
        <taxon>Mycobacterium</taxon>
        <taxon>Mycobacterium tuberculosis complex</taxon>
    </lineage>
</organism>
<reference key="1">
    <citation type="journal article" date="1998" name="Nature">
        <title>Deciphering the biology of Mycobacterium tuberculosis from the complete genome sequence.</title>
        <authorList>
            <person name="Cole S.T."/>
            <person name="Brosch R."/>
            <person name="Parkhill J."/>
            <person name="Garnier T."/>
            <person name="Churcher C.M."/>
            <person name="Harris D.E."/>
            <person name="Gordon S.V."/>
            <person name="Eiglmeier K."/>
            <person name="Gas S."/>
            <person name="Barry C.E. III"/>
            <person name="Tekaia F."/>
            <person name="Badcock K."/>
            <person name="Basham D."/>
            <person name="Brown D."/>
            <person name="Chillingworth T."/>
            <person name="Connor R."/>
            <person name="Davies R.M."/>
            <person name="Devlin K."/>
            <person name="Feltwell T."/>
            <person name="Gentles S."/>
            <person name="Hamlin N."/>
            <person name="Holroyd S."/>
            <person name="Hornsby T."/>
            <person name="Jagels K."/>
            <person name="Krogh A."/>
            <person name="McLean J."/>
            <person name="Moule S."/>
            <person name="Murphy L.D."/>
            <person name="Oliver S."/>
            <person name="Osborne J."/>
            <person name="Quail M.A."/>
            <person name="Rajandream M.A."/>
            <person name="Rogers J."/>
            <person name="Rutter S."/>
            <person name="Seeger K."/>
            <person name="Skelton S."/>
            <person name="Squares S."/>
            <person name="Squares R."/>
            <person name="Sulston J.E."/>
            <person name="Taylor K."/>
            <person name="Whitehead S."/>
            <person name="Barrell B.G."/>
        </authorList>
    </citation>
    <scope>NUCLEOTIDE SEQUENCE [LARGE SCALE GENOMIC DNA]</scope>
    <source>
        <strain>ATCC 25618 / H37Rv</strain>
    </source>
</reference>
<reference key="2">
    <citation type="journal article" date="2002" name="Infect. Immun.">
        <title>IdeR, an essential gene in Mycobacterium tuberculosis: role of IdeR in iron-dependent gene expression, iron metabolism, and oxidative stress response.</title>
        <authorList>
            <person name="Rodriguez G.M."/>
            <person name="Voskuil M.I."/>
            <person name="Gold B."/>
            <person name="Schoolnik G.K."/>
            <person name="Smith I."/>
        </authorList>
    </citation>
    <scope>INDUCTION</scope>
    <source>
        <strain>ATCC 25618 / H37Rv</strain>
    </source>
</reference>
<reference key="3">
    <citation type="journal article" date="2006" name="Proc. Natl. Acad. Sci. U.S.A.">
        <title>A genetic locus required for iron acquisition in Mycobacterium tuberculosis.</title>
        <authorList>
            <person name="Krithika R."/>
            <person name="Marathe U."/>
            <person name="Saxena P."/>
            <person name="Ansari M.Z."/>
            <person name="Mohanty D."/>
            <person name="Gokhale R.S."/>
        </authorList>
    </citation>
    <scope>FUNCTION</scope>
    <scope>ROLE IN MYCOBACTIN BIOSYNTHESIS</scope>
    <scope>PHOSPHOPANTETHEINYLATION</scope>
    <source>
        <strain>ATCC 25618 / H37Rv</strain>
    </source>
</reference>
<reference key="4">
    <citation type="journal article" date="2016" name="FEBS Open Bio">
        <title>Mass spectral determination of phosphopantetheinylation specificity for carrier proteins in Mycobacterium tuberculosis.</title>
        <authorList>
            <person name="Jung J."/>
            <person name="Bashiri G."/>
            <person name="Johnston J.M."/>
            <person name="Baker E.N."/>
        </authorList>
    </citation>
    <scope>PHOSPHOPANTETHEINYLATION AT SER-41</scope>
    <scope>MUTAGENESIS OF SER-41</scope>
</reference>
<dbReference type="EMBL" id="AL123456">
    <property type="protein sequence ID" value="CCP44102.1"/>
    <property type="status" value="ALT_INIT"/>
    <property type="molecule type" value="Genomic_DNA"/>
</dbReference>
<dbReference type="PIR" id="G70739">
    <property type="entry name" value="G70739"/>
</dbReference>
<dbReference type="RefSeq" id="NP_215860.1">
    <property type="nucleotide sequence ID" value="NC_000962.3"/>
</dbReference>
<dbReference type="RefSeq" id="WP_003406944.1">
    <property type="nucleotide sequence ID" value="NC_000962.3"/>
</dbReference>
<dbReference type="RefSeq" id="WP_003911484.1">
    <property type="nucleotide sequence ID" value="NZ_NVQJ01000031.1"/>
</dbReference>
<dbReference type="SMR" id="P9WQF1"/>
<dbReference type="STRING" id="83332.Rv1344"/>
<dbReference type="PaxDb" id="83332-Rv1344"/>
<dbReference type="DNASU" id="886848"/>
<dbReference type="GeneID" id="886848"/>
<dbReference type="KEGG" id="mtu:Rv1344"/>
<dbReference type="PATRIC" id="fig|83332.12.peg.1506"/>
<dbReference type="TubercuList" id="Rv1344"/>
<dbReference type="eggNOG" id="COG0236">
    <property type="taxonomic scope" value="Bacteria"/>
</dbReference>
<dbReference type="InParanoid" id="P9WQF1"/>
<dbReference type="OrthoDB" id="4742015at2"/>
<dbReference type="BioCyc" id="MetaCyc:G185E-5523-MONOMER"/>
<dbReference type="UniPathway" id="UPA00011"/>
<dbReference type="Proteomes" id="UP000001584">
    <property type="component" value="Chromosome"/>
</dbReference>
<dbReference type="GO" id="GO:0005829">
    <property type="term" value="C:cytosol"/>
    <property type="evidence" value="ECO:0000318"/>
    <property type="project" value="GO_Central"/>
</dbReference>
<dbReference type="GO" id="GO:0016020">
    <property type="term" value="C:membrane"/>
    <property type="evidence" value="ECO:0007669"/>
    <property type="project" value="GOC"/>
</dbReference>
<dbReference type="GO" id="GO:0000035">
    <property type="term" value="F:acyl binding"/>
    <property type="evidence" value="ECO:0000318"/>
    <property type="project" value="GO_Central"/>
</dbReference>
<dbReference type="GO" id="GO:0000036">
    <property type="term" value="F:acyl carrier activity"/>
    <property type="evidence" value="ECO:0000314"/>
    <property type="project" value="MTBBASE"/>
</dbReference>
<dbReference type="GO" id="GO:0019540">
    <property type="term" value="P:catechol-containing siderophore biosynthetic process"/>
    <property type="evidence" value="ECO:0000314"/>
    <property type="project" value="MTBBASE"/>
</dbReference>
<dbReference type="GO" id="GO:0009245">
    <property type="term" value="P:lipid A biosynthetic process"/>
    <property type="evidence" value="ECO:0000318"/>
    <property type="project" value="GO_Central"/>
</dbReference>
<dbReference type="Gene3D" id="1.10.1200.10">
    <property type="entry name" value="ACP-like"/>
    <property type="match status" value="1"/>
</dbReference>
<dbReference type="InterPro" id="IPR036736">
    <property type="entry name" value="ACP-like_sf"/>
</dbReference>
<dbReference type="InterPro" id="IPR009081">
    <property type="entry name" value="PP-bd_ACP"/>
</dbReference>
<dbReference type="NCBIfam" id="NF004533">
    <property type="entry name" value="PRK05883.1"/>
    <property type="match status" value="1"/>
</dbReference>
<dbReference type="Pfam" id="PF00550">
    <property type="entry name" value="PP-binding"/>
    <property type="match status" value="1"/>
</dbReference>
<dbReference type="SUPFAM" id="SSF47336">
    <property type="entry name" value="ACP-like"/>
    <property type="match status" value="1"/>
</dbReference>
<dbReference type="PROSITE" id="PS50075">
    <property type="entry name" value="CARRIER"/>
    <property type="match status" value="1"/>
</dbReference>
<protein>
    <recommendedName>
        <fullName>Acyl carrier protein MbtL</fullName>
        <shortName>ACP</shortName>
    </recommendedName>
    <alternativeName>
        <fullName>Mycobactin synthase protein L</fullName>
    </alternativeName>
</protein>
<keyword id="KW-0963">Cytoplasm</keyword>
<keyword id="KW-0596">Phosphopantetheine</keyword>
<keyword id="KW-0597">Phosphoprotein</keyword>
<keyword id="KW-1185">Reference proteome</keyword>
<accession>P9WQF1</accession>
<accession>L0T6K8</accession>
<accession>P63452</accession>
<accession>Q11014</accession>
<evidence type="ECO:0000250" key="1"/>
<evidence type="ECO:0000255" key="2">
    <source>
        <dbReference type="PROSITE-ProRule" id="PRU00258"/>
    </source>
</evidence>
<evidence type="ECO:0000269" key="3">
    <source>
    </source>
</evidence>
<evidence type="ECO:0000269" key="4">
    <source>
    </source>
</evidence>
<evidence type="ECO:0000269" key="5">
    <source>
    </source>
</evidence>
<evidence type="ECO:0000305" key="6"/>
<gene>
    <name type="primary">mbtL</name>
    <name type="ordered locus">Rv1344</name>
    <name type="ORF">MTCY02B10.08</name>
</gene>